<accession>Q54NS8</accession>
<comment type="function">
    <text evidence="1">Putative FAD-dependent oxidoreductase.</text>
</comment>
<comment type="cofactor">
    <cofactor evidence="1">
        <name>FAD</name>
        <dbReference type="ChEBI" id="CHEBI:57692"/>
    </cofactor>
</comment>
<comment type="similarity">
    <text evidence="3">Belongs to the FAD-dependent oxidoreductase family.</text>
</comment>
<protein>
    <recommendedName>
        <fullName>Apoptosis-inducing factor homolog B</fullName>
        <ecNumber>1.-.-.-</ecNumber>
    </recommendedName>
</protein>
<sequence length="387" mass="42511">MTSEKKRVLIIGGGYGGCEVAKQLDSKFNVTVVERKQTFFHSVGSVRAVVEPELVKKIYIPYDKLLKNGKFIFGTVIEISPTLAKLEDGQELTFDYLVIATGSNSLAPFKAPLEKKSSSEILNYFQNFSQQIKQAKSILIVGGGAVACELVSEIVEKYPVKDSELVKKITIVHSGSKLVNPKMNDKFTNVVSKAMKKRNVEVILNDRITMPDEIKANLLNQTSPNIQISSQNYTTEKGVPIQADLIIWTVGIKTNSESYQSHFSNVINESGQLKVNLSCQVQGYNNVFAIGDCTDFDEFKTAYNAGYHAAIAAKAIDALSKGKSNDKLAKHKVSGPILSLSLGPQDGITQISPTMCLGSFATKMIKSKSLFIDRYISQLNNPKPLIQ</sequence>
<evidence type="ECO:0000250" key="1"/>
<evidence type="ECO:0000255" key="2"/>
<evidence type="ECO:0000305" key="3"/>
<proteinExistence type="inferred from homology"/>
<keyword id="KW-0274">FAD</keyword>
<keyword id="KW-0285">Flavoprotein</keyword>
<keyword id="KW-0560">Oxidoreductase</keyword>
<keyword id="KW-1185">Reference proteome</keyword>
<reference key="1">
    <citation type="journal article" date="2005" name="Nature">
        <title>The genome of the social amoeba Dictyostelium discoideum.</title>
        <authorList>
            <person name="Eichinger L."/>
            <person name="Pachebat J.A."/>
            <person name="Gloeckner G."/>
            <person name="Rajandream M.A."/>
            <person name="Sucgang R."/>
            <person name="Berriman M."/>
            <person name="Song J."/>
            <person name="Olsen R."/>
            <person name="Szafranski K."/>
            <person name="Xu Q."/>
            <person name="Tunggal B."/>
            <person name="Kummerfeld S."/>
            <person name="Madera M."/>
            <person name="Konfortov B.A."/>
            <person name="Rivero F."/>
            <person name="Bankier A.T."/>
            <person name="Lehmann R."/>
            <person name="Hamlin N."/>
            <person name="Davies R."/>
            <person name="Gaudet P."/>
            <person name="Fey P."/>
            <person name="Pilcher K."/>
            <person name="Chen G."/>
            <person name="Saunders D."/>
            <person name="Sodergren E.J."/>
            <person name="Davis P."/>
            <person name="Kerhornou A."/>
            <person name="Nie X."/>
            <person name="Hall N."/>
            <person name="Anjard C."/>
            <person name="Hemphill L."/>
            <person name="Bason N."/>
            <person name="Farbrother P."/>
            <person name="Desany B."/>
            <person name="Just E."/>
            <person name="Morio T."/>
            <person name="Rost R."/>
            <person name="Churcher C.M."/>
            <person name="Cooper J."/>
            <person name="Haydock S."/>
            <person name="van Driessche N."/>
            <person name="Cronin A."/>
            <person name="Goodhead I."/>
            <person name="Muzny D.M."/>
            <person name="Mourier T."/>
            <person name="Pain A."/>
            <person name="Lu M."/>
            <person name="Harper D."/>
            <person name="Lindsay R."/>
            <person name="Hauser H."/>
            <person name="James K.D."/>
            <person name="Quiles M."/>
            <person name="Madan Babu M."/>
            <person name="Saito T."/>
            <person name="Buchrieser C."/>
            <person name="Wardroper A."/>
            <person name="Felder M."/>
            <person name="Thangavelu M."/>
            <person name="Johnson D."/>
            <person name="Knights A."/>
            <person name="Loulseged H."/>
            <person name="Mungall K.L."/>
            <person name="Oliver K."/>
            <person name="Price C."/>
            <person name="Quail M.A."/>
            <person name="Urushihara H."/>
            <person name="Hernandez J."/>
            <person name="Rabbinowitsch E."/>
            <person name="Steffen D."/>
            <person name="Sanders M."/>
            <person name="Ma J."/>
            <person name="Kohara Y."/>
            <person name="Sharp S."/>
            <person name="Simmonds M.N."/>
            <person name="Spiegler S."/>
            <person name="Tivey A."/>
            <person name="Sugano S."/>
            <person name="White B."/>
            <person name="Walker D."/>
            <person name="Woodward J.R."/>
            <person name="Winckler T."/>
            <person name="Tanaka Y."/>
            <person name="Shaulsky G."/>
            <person name="Schleicher M."/>
            <person name="Weinstock G.M."/>
            <person name="Rosenthal A."/>
            <person name="Cox E.C."/>
            <person name="Chisholm R.L."/>
            <person name="Gibbs R.A."/>
            <person name="Loomis W.F."/>
            <person name="Platzer M."/>
            <person name="Kay R.R."/>
            <person name="Williams J.G."/>
            <person name="Dear P.H."/>
            <person name="Noegel A.A."/>
            <person name="Barrell B.G."/>
            <person name="Kuspa A."/>
        </authorList>
    </citation>
    <scope>NUCLEOTIDE SEQUENCE [LARGE SCALE GENOMIC DNA]</scope>
    <source>
        <strain>AX4</strain>
    </source>
</reference>
<gene>
    <name type="primary">aifB</name>
    <name type="ORF">DDB_G0285005</name>
</gene>
<name>AIFB_DICDI</name>
<feature type="chain" id="PRO_0000331384" description="Apoptosis-inducing factor homolog B">
    <location>
        <begin position="1"/>
        <end position="387"/>
    </location>
</feature>
<feature type="binding site" evidence="2">
    <location>
        <begin position="12"/>
        <end position="16"/>
    </location>
    <ligand>
        <name>FAD</name>
        <dbReference type="ChEBI" id="CHEBI:57692"/>
    </ligand>
</feature>
<feature type="binding site" evidence="2">
    <location>
        <position position="47"/>
    </location>
    <ligand>
        <name>FAD</name>
        <dbReference type="ChEBI" id="CHEBI:57692"/>
    </ligand>
</feature>
<feature type="binding site" evidence="2">
    <location>
        <position position="292"/>
    </location>
    <ligand>
        <name>FAD</name>
        <dbReference type="ChEBI" id="CHEBI:57692"/>
    </ligand>
</feature>
<organism>
    <name type="scientific">Dictyostelium discoideum</name>
    <name type="common">Social amoeba</name>
    <dbReference type="NCBI Taxonomy" id="44689"/>
    <lineage>
        <taxon>Eukaryota</taxon>
        <taxon>Amoebozoa</taxon>
        <taxon>Evosea</taxon>
        <taxon>Eumycetozoa</taxon>
        <taxon>Dictyostelia</taxon>
        <taxon>Dictyosteliales</taxon>
        <taxon>Dictyosteliaceae</taxon>
        <taxon>Dictyostelium</taxon>
    </lineage>
</organism>
<dbReference type="EC" id="1.-.-.-"/>
<dbReference type="EMBL" id="AAFI02000073">
    <property type="protein sequence ID" value="EAL64966.1"/>
    <property type="molecule type" value="Genomic_DNA"/>
</dbReference>
<dbReference type="RefSeq" id="XP_639989.1">
    <property type="nucleotide sequence ID" value="XM_634897.1"/>
</dbReference>
<dbReference type="SMR" id="Q54NS8"/>
<dbReference type="FunCoup" id="Q54NS8">
    <property type="interactions" value="9"/>
</dbReference>
<dbReference type="STRING" id="44689.Q54NS8"/>
<dbReference type="PaxDb" id="44689-DDB0266656"/>
<dbReference type="EnsemblProtists" id="EAL64966">
    <property type="protein sequence ID" value="EAL64966"/>
    <property type="gene ID" value="DDB_G0285005"/>
</dbReference>
<dbReference type="GeneID" id="8624906"/>
<dbReference type="KEGG" id="ddi:DDB_G0285005"/>
<dbReference type="dictyBase" id="DDB_G0285005">
    <property type="gene designation" value="aifB"/>
</dbReference>
<dbReference type="VEuPathDB" id="AmoebaDB:DDB_G0285005"/>
<dbReference type="eggNOG" id="KOG2495">
    <property type="taxonomic scope" value="Eukaryota"/>
</dbReference>
<dbReference type="HOGENOM" id="CLU_019845_2_0_1"/>
<dbReference type="InParanoid" id="Q54NS8"/>
<dbReference type="OMA" id="QTEPWIN"/>
<dbReference type="PhylomeDB" id="Q54NS8"/>
<dbReference type="PRO" id="PR:Q54NS8"/>
<dbReference type="Proteomes" id="UP000002195">
    <property type="component" value="Chromosome 4"/>
</dbReference>
<dbReference type="GO" id="GO:0005737">
    <property type="term" value="C:cytoplasm"/>
    <property type="evidence" value="ECO:0000318"/>
    <property type="project" value="GO_Central"/>
</dbReference>
<dbReference type="GO" id="GO:0004174">
    <property type="term" value="F:electron-transferring-flavoprotein dehydrogenase activity"/>
    <property type="evidence" value="ECO:0000318"/>
    <property type="project" value="GO_Central"/>
</dbReference>
<dbReference type="GO" id="GO:0050660">
    <property type="term" value="F:flavin adenine dinucleotide binding"/>
    <property type="evidence" value="ECO:0000318"/>
    <property type="project" value="GO_Central"/>
</dbReference>
<dbReference type="FunFam" id="3.50.50.100:FF:000006">
    <property type="entry name" value="apoptosis-inducing factor 2"/>
    <property type="match status" value="1"/>
</dbReference>
<dbReference type="Gene3D" id="3.50.50.100">
    <property type="match status" value="1"/>
</dbReference>
<dbReference type="InterPro" id="IPR036188">
    <property type="entry name" value="FAD/NAD-bd_sf"/>
</dbReference>
<dbReference type="InterPro" id="IPR023753">
    <property type="entry name" value="FAD/NAD-binding_dom"/>
</dbReference>
<dbReference type="PANTHER" id="PTHR43735">
    <property type="entry name" value="APOPTOSIS-INDUCING FACTOR 1"/>
    <property type="match status" value="1"/>
</dbReference>
<dbReference type="PANTHER" id="PTHR43735:SF3">
    <property type="entry name" value="FERROPTOSIS SUPPRESSOR PROTEIN 1"/>
    <property type="match status" value="1"/>
</dbReference>
<dbReference type="Pfam" id="PF07992">
    <property type="entry name" value="Pyr_redox_2"/>
    <property type="match status" value="1"/>
</dbReference>
<dbReference type="PRINTS" id="PR00368">
    <property type="entry name" value="FADPNR"/>
</dbReference>
<dbReference type="PRINTS" id="PR00411">
    <property type="entry name" value="PNDRDTASEI"/>
</dbReference>
<dbReference type="SUPFAM" id="SSF51905">
    <property type="entry name" value="FAD/NAD(P)-binding domain"/>
    <property type="match status" value="2"/>
</dbReference>